<protein>
    <recommendedName>
        <fullName evidence="1">Large ribosomal subunit protein uL24</fullName>
    </recommendedName>
    <alternativeName>
        <fullName evidence="2">50S ribosomal protein L24</fullName>
    </alternativeName>
</protein>
<dbReference type="EMBL" id="BA000040">
    <property type="protein sequence ID" value="BAC50654.1"/>
    <property type="molecule type" value="Genomic_DNA"/>
</dbReference>
<dbReference type="RefSeq" id="NP_772029.1">
    <property type="nucleotide sequence ID" value="NC_004463.1"/>
</dbReference>
<dbReference type="RefSeq" id="WP_011088142.1">
    <property type="nucleotide sequence ID" value="NZ_CP011360.1"/>
</dbReference>
<dbReference type="SMR" id="Q89J95"/>
<dbReference type="FunCoup" id="Q89J95">
    <property type="interactions" value="750"/>
</dbReference>
<dbReference type="STRING" id="224911.AAV28_24355"/>
<dbReference type="EnsemblBacteria" id="BAC50654">
    <property type="protein sequence ID" value="BAC50654"/>
    <property type="gene ID" value="BAC50654"/>
</dbReference>
<dbReference type="GeneID" id="93178135"/>
<dbReference type="KEGG" id="bja:bll5389"/>
<dbReference type="PATRIC" id="fig|224911.44.peg.5288"/>
<dbReference type="eggNOG" id="COG0198">
    <property type="taxonomic scope" value="Bacteria"/>
</dbReference>
<dbReference type="HOGENOM" id="CLU_093315_2_2_5"/>
<dbReference type="InParanoid" id="Q89J95"/>
<dbReference type="OrthoDB" id="9807419at2"/>
<dbReference type="PhylomeDB" id="Q89J95"/>
<dbReference type="Proteomes" id="UP000002526">
    <property type="component" value="Chromosome"/>
</dbReference>
<dbReference type="GO" id="GO:0022625">
    <property type="term" value="C:cytosolic large ribosomal subunit"/>
    <property type="evidence" value="ECO:0000318"/>
    <property type="project" value="GO_Central"/>
</dbReference>
<dbReference type="GO" id="GO:0019843">
    <property type="term" value="F:rRNA binding"/>
    <property type="evidence" value="ECO:0007669"/>
    <property type="project" value="UniProtKB-UniRule"/>
</dbReference>
<dbReference type="GO" id="GO:0003735">
    <property type="term" value="F:structural constituent of ribosome"/>
    <property type="evidence" value="ECO:0007669"/>
    <property type="project" value="InterPro"/>
</dbReference>
<dbReference type="GO" id="GO:0006412">
    <property type="term" value="P:translation"/>
    <property type="evidence" value="ECO:0000318"/>
    <property type="project" value="GO_Central"/>
</dbReference>
<dbReference type="CDD" id="cd06089">
    <property type="entry name" value="KOW_RPL26"/>
    <property type="match status" value="1"/>
</dbReference>
<dbReference type="FunFam" id="2.30.30.30:FF:000051">
    <property type="entry name" value="50S ribosomal protein L24"/>
    <property type="match status" value="1"/>
</dbReference>
<dbReference type="Gene3D" id="2.30.30.30">
    <property type="match status" value="1"/>
</dbReference>
<dbReference type="HAMAP" id="MF_01326_B">
    <property type="entry name" value="Ribosomal_uL24_B"/>
    <property type="match status" value="1"/>
</dbReference>
<dbReference type="InterPro" id="IPR005824">
    <property type="entry name" value="KOW"/>
</dbReference>
<dbReference type="InterPro" id="IPR014722">
    <property type="entry name" value="Rib_uL2_dom2"/>
</dbReference>
<dbReference type="InterPro" id="IPR003256">
    <property type="entry name" value="Ribosomal_uL24"/>
</dbReference>
<dbReference type="InterPro" id="IPR005825">
    <property type="entry name" value="Ribosomal_uL24_CS"/>
</dbReference>
<dbReference type="InterPro" id="IPR041988">
    <property type="entry name" value="Ribosomal_uL24_KOW"/>
</dbReference>
<dbReference type="InterPro" id="IPR008991">
    <property type="entry name" value="Translation_prot_SH3-like_sf"/>
</dbReference>
<dbReference type="NCBIfam" id="TIGR01079">
    <property type="entry name" value="rplX_bact"/>
    <property type="match status" value="1"/>
</dbReference>
<dbReference type="PANTHER" id="PTHR12903">
    <property type="entry name" value="MITOCHONDRIAL RIBOSOMAL PROTEIN L24"/>
    <property type="match status" value="1"/>
</dbReference>
<dbReference type="Pfam" id="PF00467">
    <property type="entry name" value="KOW"/>
    <property type="match status" value="1"/>
</dbReference>
<dbReference type="Pfam" id="PF17136">
    <property type="entry name" value="ribosomal_L24"/>
    <property type="match status" value="1"/>
</dbReference>
<dbReference type="SMART" id="SM00739">
    <property type="entry name" value="KOW"/>
    <property type="match status" value="1"/>
</dbReference>
<dbReference type="SUPFAM" id="SSF50104">
    <property type="entry name" value="Translation proteins SH3-like domain"/>
    <property type="match status" value="1"/>
</dbReference>
<dbReference type="PROSITE" id="PS01108">
    <property type="entry name" value="RIBOSOMAL_L24"/>
    <property type="match status" value="1"/>
</dbReference>
<reference key="1">
    <citation type="journal article" date="2002" name="DNA Res.">
        <title>Complete genomic sequence of nitrogen-fixing symbiotic bacterium Bradyrhizobium japonicum USDA110.</title>
        <authorList>
            <person name="Kaneko T."/>
            <person name="Nakamura Y."/>
            <person name="Sato S."/>
            <person name="Minamisawa K."/>
            <person name="Uchiumi T."/>
            <person name="Sasamoto S."/>
            <person name="Watanabe A."/>
            <person name="Idesawa K."/>
            <person name="Iriguchi M."/>
            <person name="Kawashima K."/>
            <person name="Kohara M."/>
            <person name="Matsumoto M."/>
            <person name="Shimpo S."/>
            <person name="Tsuruoka H."/>
            <person name="Wada T."/>
            <person name="Yamada M."/>
            <person name="Tabata S."/>
        </authorList>
    </citation>
    <scope>NUCLEOTIDE SEQUENCE [LARGE SCALE GENOMIC DNA]</scope>
    <source>
        <strain>JCM 10833 / BCRC 13528 / IAM 13628 / NBRC 14792 / USDA 110</strain>
    </source>
</reference>
<proteinExistence type="inferred from homology"/>
<accession>Q89J95</accession>
<organism>
    <name type="scientific">Bradyrhizobium diazoefficiens (strain JCM 10833 / BCRC 13528 / IAM 13628 / NBRC 14792 / USDA 110)</name>
    <dbReference type="NCBI Taxonomy" id="224911"/>
    <lineage>
        <taxon>Bacteria</taxon>
        <taxon>Pseudomonadati</taxon>
        <taxon>Pseudomonadota</taxon>
        <taxon>Alphaproteobacteria</taxon>
        <taxon>Hyphomicrobiales</taxon>
        <taxon>Nitrobacteraceae</taxon>
        <taxon>Bradyrhizobium</taxon>
    </lineage>
</organism>
<keyword id="KW-1185">Reference proteome</keyword>
<keyword id="KW-0687">Ribonucleoprotein</keyword>
<keyword id="KW-0689">Ribosomal protein</keyword>
<keyword id="KW-0694">RNA-binding</keyword>
<keyword id="KW-0699">rRNA-binding</keyword>
<comment type="function">
    <text evidence="1">One of two assembly initiator proteins, it binds directly to the 5'-end of the 23S rRNA, where it nucleates assembly of the 50S subunit.</text>
</comment>
<comment type="function">
    <text evidence="1">One of the proteins that surrounds the polypeptide exit tunnel on the outside of the subunit.</text>
</comment>
<comment type="subunit">
    <text evidence="1">Part of the 50S ribosomal subunit.</text>
</comment>
<comment type="similarity">
    <text evidence="1">Belongs to the universal ribosomal protein uL24 family.</text>
</comment>
<sequence length="104" mass="11113">MAAKIRKGDKVVVLTGRDKGRTGEVFEVRPDAGTALVRGINMVKRHQKQTQAQEGGIISKEAPIQLSNIAYVGKDGKPTRVGFKILADGKKVRIAKSSGAEIDG</sequence>
<gene>
    <name evidence="1" type="primary">rplX</name>
    <name type="ordered locus">bll5389</name>
</gene>
<feature type="chain" id="PRO_0000130630" description="Large ribosomal subunit protein uL24">
    <location>
        <begin position="1"/>
        <end position="104"/>
    </location>
</feature>
<evidence type="ECO:0000255" key="1">
    <source>
        <dbReference type="HAMAP-Rule" id="MF_01326"/>
    </source>
</evidence>
<evidence type="ECO:0000305" key="2"/>
<name>RL24_BRADU</name>